<sequence length="189" mass="21997">MVKFIDAKIDNFAKQLQQRNNLDRIEYLKMRLGMQVVVNNFFKTIVIYGVSLLCHMFLYTLTVHLTFFFIRHFAHGAHAKNSLLCYIQSVIYFVLLPWIVGYVQVSSLIMYTLALVGLIIISIYAPSATKKQPIPERLRRGKKIKAICLTLIFLLISLFLNEPYQQLMLLGIVIISILQFPIFFPKEDY</sequence>
<accession>Q49YZ1</accession>
<proteinExistence type="inferred from homology"/>
<protein>
    <recommendedName>
        <fullName evidence="1">Accessory gene regulator protein B</fullName>
        <ecNumber evidence="1">3.4.-.-</ecNumber>
    </recommendedName>
</protein>
<feature type="chain" id="PRO_0000168130" description="Accessory gene regulator protein B">
    <location>
        <begin position="1"/>
        <end position="189"/>
    </location>
</feature>
<feature type="transmembrane region" description="Helical" evidence="1">
    <location>
        <begin position="50"/>
        <end position="70"/>
    </location>
</feature>
<feature type="transmembrane region" description="Helical" evidence="1">
    <location>
        <begin position="83"/>
        <end position="103"/>
    </location>
</feature>
<feature type="transmembrane region" description="Helical" evidence="1">
    <location>
        <begin position="105"/>
        <end position="125"/>
    </location>
</feature>
<feature type="transmembrane region" description="Helical" evidence="1">
    <location>
        <begin position="143"/>
        <end position="163"/>
    </location>
</feature>
<feature type="transmembrane region" description="Helical" evidence="1">
    <location>
        <begin position="164"/>
        <end position="184"/>
    </location>
</feature>
<organism>
    <name type="scientific">Staphylococcus saprophyticus subsp. saprophyticus (strain ATCC 15305 / DSM 20229 / NCIMB 8711 / NCTC 7292 / S-41)</name>
    <dbReference type="NCBI Taxonomy" id="342451"/>
    <lineage>
        <taxon>Bacteria</taxon>
        <taxon>Bacillati</taxon>
        <taxon>Bacillota</taxon>
        <taxon>Bacilli</taxon>
        <taxon>Bacillales</taxon>
        <taxon>Staphylococcaceae</taxon>
        <taxon>Staphylococcus</taxon>
    </lineage>
</organism>
<gene>
    <name evidence="1" type="primary">agrB</name>
    <name type="ordered locus">SSP0842</name>
</gene>
<comment type="function">
    <text evidence="1">Essential for the production of a quorum sensing system signal molecule, the autoinducing peptide (AIP). This quorum sensing system is responsible for the regulation of the expression of virulence factor genes. Involved in the proteolytic processing of AgrD, the precursor of AIP.</text>
</comment>
<comment type="subcellular location">
    <subcellularLocation>
        <location evidence="1">Cell membrane</location>
        <topology evidence="1">Multi-pass membrane protein</topology>
    </subcellularLocation>
</comment>
<comment type="similarity">
    <text evidence="1">Belongs to the AgrB family.</text>
</comment>
<reference key="1">
    <citation type="journal article" date="2005" name="Proc. Natl. Acad. Sci. U.S.A.">
        <title>Whole genome sequence of Staphylococcus saprophyticus reveals the pathogenesis of uncomplicated urinary tract infection.</title>
        <authorList>
            <person name="Kuroda M."/>
            <person name="Yamashita A."/>
            <person name="Hirakawa H."/>
            <person name="Kumano M."/>
            <person name="Morikawa K."/>
            <person name="Higashide M."/>
            <person name="Maruyama A."/>
            <person name="Inose Y."/>
            <person name="Matoba K."/>
            <person name="Toh H."/>
            <person name="Kuhara S."/>
            <person name="Hattori M."/>
            <person name="Ohta T."/>
        </authorList>
    </citation>
    <scope>NUCLEOTIDE SEQUENCE [LARGE SCALE GENOMIC DNA]</scope>
    <source>
        <strain>ATCC 15305 / DSM 20229 / NCIMB 8711 / NCTC 7292 / S-41</strain>
    </source>
</reference>
<dbReference type="EC" id="3.4.-.-" evidence="1"/>
<dbReference type="EMBL" id="AP008934">
    <property type="protein sequence ID" value="BAE17987.1"/>
    <property type="molecule type" value="Genomic_DNA"/>
</dbReference>
<dbReference type="RefSeq" id="WP_011302729.1">
    <property type="nucleotide sequence ID" value="NZ_MTGA01000028.1"/>
</dbReference>
<dbReference type="SMR" id="Q49YZ1"/>
<dbReference type="MEROPS" id="C75.001"/>
<dbReference type="GeneID" id="3617364"/>
<dbReference type="KEGG" id="ssp:SSP0842"/>
<dbReference type="eggNOG" id="COG4512">
    <property type="taxonomic scope" value="Bacteria"/>
</dbReference>
<dbReference type="HOGENOM" id="CLU_098969_2_2_9"/>
<dbReference type="OrthoDB" id="2183538at2"/>
<dbReference type="Proteomes" id="UP000006371">
    <property type="component" value="Chromosome"/>
</dbReference>
<dbReference type="GO" id="GO:0005886">
    <property type="term" value="C:plasma membrane"/>
    <property type="evidence" value="ECO:0007669"/>
    <property type="project" value="UniProtKB-SubCell"/>
</dbReference>
<dbReference type="GO" id="GO:0008233">
    <property type="term" value="F:peptidase activity"/>
    <property type="evidence" value="ECO:0007669"/>
    <property type="project" value="UniProtKB-UniRule"/>
</dbReference>
<dbReference type="GO" id="GO:0006508">
    <property type="term" value="P:proteolysis"/>
    <property type="evidence" value="ECO:0007669"/>
    <property type="project" value="UniProtKB-KW"/>
</dbReference>
<dbReference type="GO" id="GO:0009372">
    <property type="term" value="P:quorum sensing"/>
    <property type="evidence" value="ECO:0007669"/>
    <property type="project" value="UniProtKB-UniRule"/>
</dbReference>
<dbReference type="HAMAP" id="MF_00784">
    <property type="entry name" value="AgrB"/>
    <property type="match status" value="1"/>
</dbReference>
<dbReference type="InterPro" id="IPR006741">
    <property type="entry name" value="AgrB"/>
</dbReference>
<dbReference type="Pfam" id="PF04647">
    <property type="entry name" value="AgrB"/>
    <property type="match status" value="1"/>
</dbReference>
<dbReference type="SMART" id="SM00793">
    <property type="entry name" value="AgrB"/>
    <property type="match status" value="1"/>
</dbReference>
<name>AGRB_STAS1</name>
<evidence type="ECO:0000255" key="1">
    <source>
        <dbReference type="HAMAP-Rule" id="MF_00784"/>
    </source>
</evidence>
<keyword id="KW-1003">Cell membrane</keyword>
<keyword id="KW-0378">Hydrolase</keyword>
<keyword id="KW-0472">Membrane</keyword>
<keyword id="KW-0645">Protease</keyword>
<keyword id="KW-0673">Quorum sensing</keyword>
<keyword id="KW-1185">Reference proteome</keyword>
<keyword id="KW-0812">Transmembrane</keyword>
<keyword id="KW-1133">Transmembrane helix</keyword>
<keyword id="KW-0843">Virulence</keyword>